<evidence type="ECO:0000255" key="1">
    <source>
        <dbReference type="HAMAP-Rule" id="MF_00048"/>
    </source>
</evidence>
<sequence>MKKFNKDIGTYCENLACDYLIKNNFKILECNFKNRLGEIDIISIRNSILIIIEVKGRYNYEFGVPKESVSVSKQKNIIKVTKSYINYKKLYNFNVRFDVIEVYLNKIDSSYKINHIKDAFRT</sequence>
<dbReference type="EMBL" id="CP001078">
    <property type="protein sequence ID" value="ACD53024.1"/>
    <property type="molecule type" value="Genomic_DNA"/>
</dbReference>
<dbReference type="RefSeq" id="WP_003371764.1">
    <property type="nucleotide sequence ID" value="NC_010723.1"/>
</dbReference>
<dbReference type="SMR" id="B2V4E9"/>
<dbReference type="KEGG" id="cbt:CLH_1204"/>
<dbReference type="HOGENOM" id="CLU_115353_2_1_9"/>
<dbReference type="GO" id="GO:0003676">
    <property type="term" value="F:nucleic acid binding"/>
    <property type="evidence" value="ECO:0007669"/>
    <property type="project" value="InterPro"/>
</dbReference>
<dbReference type="Gene3D" id="3.40.1350.10">
    <property type="match status" value="1"/>
</dbReference>
<dbReference type="HAMAP" id="MF_00048">
    <property type="entry name" value="UPF0102"/>
    <property type="match status" value="1"/>
</dbReference>
<dbReference type="InterPro" id="IPR011335">
    <property type="entry name" value="Restrct_endonuc-II-like"/>
</dbReference>
<dbReference type="InterPro" id="IPR011856">
    <property type="entry name" value="tRNA_endonuc-like_dom_sf"/>
</dbReference>
<dbReference type="InterPro" id="IPR003509">
    <property type="entry name" value="UPF0102_YraN-like"/>
</dbReference>
<dbReference type="PANTHER" id="PTHR34039">
    <property type="entry name" value="UPF0102 PROTEIN YRAN"/>
    <property type="match status" value="1"/>
</dbReference>
<dbReference type="PANTHER" id="PTHR34039:SF1">
    <property type="entry name" value="UPF0102 PROTEIN YRAN"/>
    <property type="match status" value="1"/>
</dbReference>
<dbReference type="Pfam" id="PF02021">
    <property type="entry name" value="UPF0102"/>
    <property type="match status" value="1"/>
</dbReference>
<dbReference type="SUPFAM" id="SSF52980">
    <property type="entry name" value="Restriction endonuclease-like"/>
    <property type="match status" value="1"/>
</dbReference>
<proteinExistence type="inferred from homology"/>
<organism>
    <name type="scientific">Clostridium botulinum (strain Alaska E43 / Type E3)</name>
    <dbReference type="NCBI Taxonomy" id="508767"/>
    <lineage>
        <taxon>Bacteria</taxon>
        <taxon>Bacillati</taxon>
        <taxon>Bacillota</taxon>
        <taxon>Clostridia</taxon>
        <taxon>Eubacteriales</taxon>
        <taxon>Clostridiaceae</taxon>
        <taxon>Clostridium</taxon>
    </lineage>
</organism>
<protein>
    <recommendedName>
        <fullName evidence="1">UPF0102 protein CLH_1204</fullName>
    </recommendedName>
</protein>
<reference key="1">
    <citation type="submission" date="2008-05" db="EMBL/GenBank/DDBJ databases">
        <title>Complete genome sequence of Clostridium botulinum E3 str. Alaska E43.</title>
        <authorList>
            <person name="Brinkac L.M."/>
            <person name="Brown J.L."/>
            <person name="Bruce D."/>
            <person name="Detter C."/>
            <person name="Munk C."/>
            <person name="Smith L.A."/>
            <person name="Smith T.J."/>
            <person name="Sutton G."/>
            <person name="Brettin T.S."/>
        </authorList>
    </citation>
    <scope>NUCLEOTIDE SEQUENCE [LARGE SCALE GENOMIC DNA]</scope>
    <source>
        <strain>Alaska E43 / Type E3</strain>
    </source>
</reference>
<comment type="similarity">
    <text evidence="1">Belongs to the UPF0102 family.</text>
</comment>
<gene>
    <name type="ordered locus">CLH_1204</name>
</gene>
<name>Y1204_CLOBA</name>
<accession>B2V4E9</accession>
<feature type="chain" id="PRO_1000091231" description="UPF0102 protein CLH_1204">
    <location>
        <begin position="1"/>
        <end position="122"/>
    </location>
</feature>